<protein>
    <recommendedName>
        <fullName evidence="3">O-methyltransferase bfoD</fullName>
        <ecNumber evidence="4">2.1.1.-</ecNumber>
    </recommendedName>
    <alternativeName>
        <fullName evidence="3">Bifonsecin B biosynthesis cluster protein D</fullName>
    </alternativeName>
</protein>
<name>BFOD_ASPBC</name>
<organism>
    <name type="scientific">Aspergillus brasiliensis (strain CBS 101740 / IMI 381727 / IBT 21946)</name>
    <dbReference type="NCBI Taxonomy" id="767769"/>
    <lineage>
        <taxon>Eukaryota</taxon>
        <taxon>Fungi</taxon>
        <taxon>Dikarya</taxon>
        <taxon>Ascomycota</taxon>
        <taxon>Pezizomycotina</taxon>
        <taxon>Eurotiomycetes</taxon>
        <taxon>Eurotiomycetidae</taxon>
        <taxon>Eurotiales</taxon>
        <taxon>Aspergillaceae</taxon>
        <taxon>Aspergillus</taxon>
        <taxon>Aspergillus subgen. Circumdati</taxon>
    </lineage>
</organism>
<dbReference type="EC" id="2.1.1.-" evidence="4"/>
<dbReference type="EMBL" id="KV878681">
    <property type="protein sequence ID" value="OJJ74127.1"/>
    <property type="molecule type" value="Genomic_DNA"/>
</dbReference>
<dbReference type="SMR" id="A0A1L9UR19"/>
<dbReference type="STRING" id="767769.A0A1L9UR19"/>
<dbReference type="VEuPathDB" id="FungiDB:ASPBRDRAFT_39215"/>
<dbReference type="OMA" id="CEPEPNM"/>
<dbReference type="OrthoDB" id="1606438at2759"/>
<dbReference type="Proteomes" id="UP000184499">
    <property type="component" value="Unassembled WGS sequence"/>
</dbReference>
<dbReference type="GO" id="GO:0008171">
    <property type="term" value="F:O-methyltransferase activity"/>
    <property type="evidence" value="ECO:0007669"/>
    <property type="project" value="InterPro"/>
</dbReference>
<dbReference type="GO" id="GO:0032259">
    <property type="term" value="P:methylation"/>
    <property type="evidence" value="ECO:0007669"/>
    <property type="project" value="UniProtKB-KW"/>
</dbReference>
<dbReference type="GO" id="GO:0044550">
    <property type="term" value="P:secondary metabolite biosynthetic process"/>
    <property type="evidence" value="ECO:0007669"/>
    <property type="project" value="UniProtKB-ARBA"/>
</dbReference>
<dbReference type="Gene3D" id="3.40.50.150">
    <property type="entry name" value="Vaccinia Virus protein VP39"/>
    <property type="match status" value="1"/>
</dbReference>
<dbReference type="InterPro" id="IPR016461">
    <property type="entry name" value="COMT-like"/>
</dbReference>
<dbReference type="InterPro" id="IPR001077">
    <property type="entry name" value="O_MeTrfase_dom"/>
</dbReference>
<dbReference type="InterPro" id="IPR029063">
    <property type="entry name" value="SAM-dependent_MTases_sf"/>
</dbReference>
<dbReference type="InterPro" id="IPR036390">
    <property type="entry name" value="WH_DNA-bd_sf"/>
</dbReference>
<dbReference type="PANTHER" id="PTHR43712:SF15">
    <property type="entry name" value="MONODICTYPHENONE CLUSTER TRANSCRIPTIONAL COACTIVATOR MDPA"/>
    <property type="match status" value="1"/>
</dbReference>
<dbReference type="PANTHER" id="PTHR43712">
    <property type="entry name" value="PUTATIVE (AFU_ORTHOLOGUE AFUA_4G14580)-RELATED"/>
    <property type="match status" value="1"/>
</dbReference>
<dbReference type="Pfam" id="PF00891">
    <property type="entry name" value="Methyltransf_2"/>
    <property type="match status" value="1"/>
</dbReference>
<dbReference type="SUPFAM" id="SSF53335">
    <property type="entry name" value="S-adenosyl-L-methionine-dependent methyltransferases"/>
    <property type="match status" value="1"/>
</dbReference>
<dbReference type="SUPFAM" id="SSF46785">
    <property type="entry name" value="Winged helix' DNA-binding domain"/>
    <property type="match status" value="1"/>
</dbReference>
<dbReference type="PROSITE" id="PS51683">
    <property type="entry name" value="SAM_OMT_II"/>
    <property type="match status" value="1"/>
</dbReference>
<proteinExistence type="inferred from homology"/>
<keyword id="KW-0489">Methyltransferase</keyword>
<keyword id="KW-1185">Reference proteome</keyword>
<keyword id="KW-0949">S-adenosyl-L-methionine</keyword>
<keyword id="KW-0808">Transferase</keyword>
<sequence length="424" mass="46912">MADCLSSQLERYANQVASSAGIIISHLKTLKDEPSTLPSETTVPTAIGTAQLQLAEAAFQLLHLTRDPGNVLTNLTVDLQVISSVRWLLHFEIPSLVPQEGTISYQELSCLANVPDNLLRSHLRLAMTCHLFQESGPTGMVAHSAVSRKLASDPSLAYWGQYFANTVFPTATQSVNATATWADSKQLNETAHNLAFDHRGTFFDYIAQDPARTVEFANSMRAVSTTGPFDTCHLCKSFDWSSLGDGVVVDMGGSTGHASITLAESFPSLRFVVQDLPDVVSDSIKRLEERQLPLSVTSRIRFQGHSLFHLQPVKGAAVYLLRQILHDWPNQEAIKILRSIVPAMGPKSRIFIADIVLPKTGSIPATEERVMRCNDLLLHQFTNTLERTFEDWQAIVSRVDDRLQIQHVYRDPGSILSLLVLEIV</sequence>
<evidence type="ECO:0000255" key="1">
    <source>
        <dbReference type="PROSITE-ProRule" id="PRU01020"/>
    </source>
</evidence>
<evidence type="ECO:0000269" key="2">
    <source>
    </source>
</evidence>
<evidence type="ECO:0000303" key="3">
    <source>
    </source>
</evidence>
<evidence type="ECO:0000305" key="4">
    <source>
    </source>
</evidence>
<reference key="1">
    <citation type="journal article" date="2017" name="Genome Biol.">
        <title>Comparative genomics reveals high biological diversity and specific adaptations in the industrially and medically important fungal genus Aspergillus.</title>
        <authorList>
            <person name="de Vries R.P."/>
            <person name="Riley R."/>
            <person name="Wiebenga A."/>
            <person name="Aguilar-Osorio G."/>
            <person name="Amillis S."/>
            <person name="Uchima C.A."/>
            <person name="Anderluh G."/>
            <person name="Asadollahi M."/>
            <person name="Askin M."/>
            <person name="Barry K."/>
            <person name="Battaglia E."/>
            <person name="Bayram O."/>
            <person name="Benocci T."/>
            <person name="Braus-Stromeyer S.A."/>
            <person name="Caldana C."/>
            <person name="Canovas D."/>
            <person name="Cerqueira G.C."/>
            <person name="Chen F."/>
            <person name="Chen W."/>
            <person name="Choi C."/>
            <person name="Clum A."/>
            <person name="Dos Santos R.A."/>
            <person name="Damasio A.R."/>
            <person name="Diallinas G."/>
            <person name="Emri T."/>
            <person name="Fekete E."/>
            <person name="Flipphi M."/>
            <person name="Freyberg S."/>
            <person name="Gallo A."/>
            <person name="Gournas C."/>
            <person name="Habgood R."/>
            <person name="Hainaut M."/>
            <person name="Harispe M.L."/>
            <person name="Henrissat B."/>
            <person name="Hilden K.S."/>
            <person name="Hope R."/>
            <person name="Hossain A."/>
            <person name="Karabika E."/>
            <person name="Karaffa L."/>
            <person name="Karanyi Z."/>
            <person name="Krasevec N."/>
            <person name="Kuo A."/>
            <person name="Kusch H."/>
            <person name="LaButti K."/>
            <person name="Lagendijk E.L."/>
            <person name="Lapidus A."/>
            <person name="Levasseur A."/>
            <person name="Lindquist E."/>
            <person name="Lipzen A."/>
            <person name="Logrieco A.F."/>
            <person name="MacCabe A."/>
            <person name="Maekelae M.R."/>
            <person name="Malavazi I."/>
            <person name="Melin P."/>
            <person name="Meyer V."/>
            <person name="Mielnichuk N."/>
            <person name="Miskei M."/>
            <person name="Molnar A.P."/>
            <person name="Mule G."/>
            <person name="Ngan C.Y."/>
            <person name="Orejas M."/>
            <person name="Orosz E."/>
            <person name="Ouedraogo J.P."/>
            <person name="Overkamp K.M."/>
            <person name="Park H.-S."/>
            <person name="Perrone G."/>
            <person name="Piumi F."/>
            <person name="Punt P.J."/>
            <person name="Ram A.F."/>
            <person name="Ramon A."/>
            <person name="Rauscher S."/>
            <person name="Record E."/>
            <person name="Riano-Pachon D.M."/>
            <person name="Robert V."/>
            <person name="Roehrig J."/>
            <person name="Ruller R."/>
            <person name="Salamov A."/>
            <person name="Salih N.S."/>
            <person name="Samson R.A."/>
            <person name="Sandor E."/>
            <person name="Sanguinetti M."/>
            <person name="Schuetze T."/>
            <person name="Sepcic K."/>
            <person name="Shelest E."/>
            <person name="Sherlock G."/>
            <person name="Sophianopoulou V."/>
            <person name="Squina F.M."/>
            <person name="Sun H."/>
            <person name="Susca A."/>
            <person name="Todd R.B."/>
            <person name="Tsang A."/>
            <person name="Unkles S.E."/>
            <person name="van de Wiele N."/>
            <person name="van Rossen-Uffink D."/>
            <person name="Oliveira J.V."/>
            <person name="Vesth T.C."/>
            <person name="Visser J."/>
            <person name="Yu J.-H."/>
            <person name="Zhou M."/>
            <person name="Andersen M.R."/>
            <person name="Archer D.B."/>
            <person name="Baker S.E."/>
            <person name="Benoit I."/>
            <person name="Brakhage A.A."/>
            <person name="Braus G.H."/>
            <person name="Fischer R."/>
            <person name="Frisvad J.C."/>
            <person name="Goldman G.H."/>
            <person name="Houbraken J."/>
            <person name="Oakley B."/>
            <person name="Pocsi I."/>
            <person name="Scazzocchio C."/>
            <person name="Seiboth B."/>
            <person name="vanKuyk P.A."/>
            <person name="Wortman J."/>
            <person name="Dyer P.S."/>
            <person name="Grigoriev I.V."/>
        </authorList>
    </citation>
    <scope>NUCLEOTIDE SEQUENCE [LARGE SCALE GENOMIC DNA]</scope>
    <source>
        <strain>CBS 101740 / IMI 381727 / IBT 21946</strain>
    </source>
</reference>
<reference key="2">
    <citation type="journal article" date="2019" name="Biochemistry">
        <title>Biaryl-forming enzymes from Aspergilli exhibit substrate-dependent stereoselectivity.</title>
        <authorList>
            <person name="Obermaier S."/>
            <person name="Mueller M."/>
        </authorList>
    </citation>
    <scope>FUNCTION</scope>
    <scope>PATHWAY</scope>
</reference>
<accession>A0A1L9UR19</accession>
<feature type="chain" id="PRO_0000448926" description="O-methyltransferase bfoD">
    <location>
        <begin position="1"/>
        <end position="424"/>
    </location>
</feature>
<feature type="active site" description="Proton acceptor" evidence="1">
    <location>
        <position position="326"/>
    </location>
</feature>
<feature type="binding site" evidence="1">
    <location>
        <position position="275"/>
    </location>
    <ligand>
        <name>S-adenosyl-L-methionine</name>
        <dbReference type="ChEBI" id="CHEBI:59789"/>
    </ligand>
</feature>
<gene>
    <name evidence="3" type="primary">bfoD</name>
    <name type="ORF">ASPBRDRAFT_39215</name>
</gene>
<comment type="function">
    <text evidence="2 4">Cytochrome P450 monooxygenase; part of the gene cluster that mediates the biosynthesis of bifonsecin B, a dimeric gamma-naphthopyrone (PubMed:31067027). The first step in the biosynthesis of bifonsecin B is the production of gamma-naphthopyrone precursor YWA1 by the non-reducing polyketide synthase albA, via condensation of one acetyl-CoA starter unit with 6 malonyl-CoA units (PubMed:31067027). YWA1 is then methylated by bfoE at position C-6 to yield foncesin which is further methylated at position C-8 by bfoD to produce fonsecin B (Probable). A key enzyme in the biosynthetic pathway is the cytochrome P450 monooxygenase bfoB which catalyzes the oxidative dimerization of fonsecin B to bifonsecin B (PubMed:31067027). Bfob also catalyzes the oxidative dimerization of rubrofusarin B into nigerone (PubMed:31067027). The stereoselectivity of bfoB is influenced by the two natural monomeric substrates; homodimerization of fonsecin B yields a stereochemically pure biaryl, M-foncerine B, while rubrofusarin B yields a mixture of enantiomers M- and P-nigerone (PubMed:31067027).</text>
</comment>
<comment type="pathway">
    <text evidence="4">Secondary metabolite biosynthesis.</text>
</comment>
<comment type="similarity">
    <text evidence="1">Belongs to the class I-like SAM-binding methyltransferase superfamily. Cation-independent O-methyltransferase family.</text>
</comment>